<accession>A6GWI5</accession>
<evidence type="ECO:0000255" key="1">
    <source>
        <dbReference type="HAMAP-Rule" id="MF_00014"/>
    </source>
</evidence>
<feature type="chain" id="PRO_0000321729" description="Ribosome maturation factor RimM">
    <location>
        <begin position="1"/>
        <end position="174"/>
    </location>
</feature>
<feature type="domain" description="PRC barrel" evidence="1">
    <location>
        <begin position="97"/>
        <end position="169"/>
    </location>
</feature>
<organism>
    <name type="scientific">Flavobacterium psychrophilum (strain ATCC 49511 / DSM 21280 / CIP 103535 / JIP02/86)</name>
    <dbReference type="NCBI Taxonomy" id="402612"/>
    <lineage>
        <taxon>Bacteria</taxon>
        <taxon>Pseudomonadati</taxon>
        <taxon>Bacteroidota</taxon>
        <taxon>Flavobacteriia</taxon>
        <taxon>Flavobacteriales</taxon>
        <taxon>Flavobacteriaceae</taxon>
        <taxon>Flavobacterium</taxon>
    </lineage>
</organism>
<comment type="function">
    <text evidence="1">An accessory protein needed during the final step in the assembly of 30S ribosomal subunit, possibly for assembly of the head region. Essential for efficient processing of 16S rRNA. May be needed both before and after RbfA during the maturation of 16S rRNA. It has affinity for free ribosomal 30S subunits but not for 70S ribosomes.</text>
</comment>
<comment type="subunit">
    <text evidence="1">Binds ribosomal protein uS19.</text>
</comment>
<comment type="subcellular location">
    <subcellularLocation>
        <location evidence="1">Cytoplasm</location>
    </subcellularLocation>
</comment>
<comment type="domain">
    <text evidence="1">The PRC barrel domain binds ribosomal protein uS19.</text>
</comment>
<comment type="similarity">
    <text evidence="1">Belongs to the RimM family.</text>
</comment>
<reference key="1">
    <citation type="journal article" date="2007" name="Nat. Biotechnol.">
        <title>Complete genome sequence of the fish pathogen Flavobacterium psychrophilum.</title>
        <authorList>
            <person name="Duchaud E."/>
            <person name="Boussaha M."/>
            <person name="Loux V."/>
            <person name="Bernardet J.-F."/>
            <person name="Michel C."/>
            <person name="Kerouault B."/>
            <person name="Mondot S."/>
            <person name="Nicolas P."/>
            <person name="Bossy R."/>
            <person name="Caron C."/>
            <person name="Bessieres P."/>
            <person name="Gibrat J.-F."/>
            <person name="Claverol S."/>
            <person name="Dumetz F."/>
            <person name="Le Henaff M."/>
            <person name="Benmansour A."/>
        </authorList>
    </citation>
    <scope>NUCLEOTIDE SEQUENCE [LARGE SCALE GENOMIC DNA]</scope>
    <source>
        <strain>ATCC 49511 / DSM 21280 / CIP 103535 / JIP02/86</strain>
    </source>
</reference>
<keyword id="KW-0143">Chaperone</keyword>
<keyword id="KW-0963">Cytoplasm</keyword>
<keyword id="KW-1185">Reference proteome</keyword>
<keyword id="KW-0690">Ribosome biogenesis</keyword>
<keyword id="KW-0698">rRNA processing</keyword>
<protein>
    <recommendedName>
        <fullName evidence="1">Ribosome maturation factor RimM</fullName>
    </recommendedName>
</protein>
<gene>
    <name evidence="1" type="primary">rimM</name>
    <name type="ordered locus">FP0345</name>
</gene>
<proteinExistence type="inferred from homology"/>
<name>RIMM_FLAPJ</name>
<dbReference type="EMBL" id="AM398681">
    <property type="protein sequence ID" value="CAL42458.1"/>
    <property type="molecule type" value="Genomic_DNA"/>
</dbReference>
<dbReference type="RefSeq" id="WP_011962516.1">
    <property type="nucleotide sequence ID" value="NC_009613.3"/>
</dbReference>
<dbReference type="RefSeq" id="YP_001295276.1">
    <property type="nucleotide sequence ID" value="NC_009613.3"/>
</dbReference>
<dbReference type="SMR" id="A6GWI5"/>
<dbReference type="STRING" id="402612.FP0345"/>
<dbReference type="EnsemblBacteria" id="CAL42458">
    <property type="protein sequence ID" value="CAL42458"/>
    <property type="gene ID" value="FP0345"/>
</dbReference>
<dbReference type="GeneID" id="66551480"/>
<dbReference type="KEGG" id="fps:FP0345"/>
<dbReference type="PATRIC" id="fig|402612.5.peg.357"/>
<dbReference type="eggNOG" id="COG0806">
    <property type="taxonomic scope" value="Bacteria"/>
</dbReference>
<dbReference type="HOGENOM" id="CLU_077636_4_1_10"/>
<dbReference type="OrthoDB" id="9810331at2"/>
<dbReference type="Proteomes" id="UP000006394">
    <property type="component" value="Chromosome"/>
</dbReference>
<dbReference type="GO" id="GO:0005737">
    <property type="term" value="C:cytoplasm"/>
    <property type="evidence" value="ECO:0007669"/>
    <property type="project" value="UniProtKB-SubCell"/>
</dbReference>
<dbReference type="GO" id="GO:0005840">
    <property type="term" value="C:ribosome"/>
    <property type="evidence" value="ECO:0007669"/>
    <property type="project" value="InterPro"/>
</dbReference>
<dbReference type="GO" id="GO:0043022">
    <property type="term" value="F:ribosome binding"/>
    <property type="evidence" value="ECO:0007669"/>
    <property type="project" value="InterPro"/>
</dbReference>
<dbReference type="GO" id="GO:0042274">
    <property type="term" value="P:ribosomal small subunit biogenesis"/>
    <property type="evidence" value="ECO:0007669"/>
    <property type="project" value="UniProtKB-UniRule"/>
</dbReference>
<dbReference type="GO" id="GO:0006364">
    <property type="term" value="P:rRNA processing"/>
    <property type="evidence" value="ECO:0007669"/>
    <property type="project" value="UniProtKB-UniRule"/>
</dbReference>
<dbReference type="Gene3D" id="2.30.30.240">
    <property type="entry name" value="PRC-barrel domain"/>
    <property type="match status" value="1"/>
</dbReference>
<dbReference type="Gene3D" id="2.40.30.60">
    <property type="entry name" value="RimM"/>
    <property type="match status" value="1"/>
</dbReference>
<dbReference type="HAMAP" id="MF_00014">
    <property type="entry name" value="Ribosome_mat_RimM"/>
    <property type="match status" value="1"/>
</dbReference>
<dbReference type="InterPro" id="IPR011033">
    <property type="entry name" value="PRC_barrel-like_sf"/>
</dbReference>
<dbReference type="InterPro" id="IPR056792">
    <property type="entry name" value="PRC_RimM"/>
</dbReference>
<dbReference type="InterPro" id="IPR011961">
    <property type="entry name" value="RimM"/>
</dbReference>
<dbReference type="InterPro" id="IPR002676">
    <property type="entry name" value="RimM_N"/>
</dbReference>
<dbReference type="InterPro" id="IPR036976">
    <property type="entry name" value="RimM_N_sf"/>
</dbReference>
<dbReference type="InterPro" id="IPR009000">
    <property type="entry name" value="Transl_B-barrel_sf"/>
</dbReference>
<dbReference type="NCBIfam" id="TIGR02273">
    <property type="entry name" value="16S_RimM"/>
    <property type="match status" value="1"/>
</dbReference>
<dbReference type="PANTHER" id="PTHR33692">
    <property type="entry name" value="RIBOSOME MATURATION FACTOR RIMM"/>
    <property type="match status" value="1"/>
</dbReference>
<dbReference type="PANTHER" id="PTHR33692:SF1">
    <property type="entry name" value="RIBOSOME MATURATION FACTOR RIMM"/>
    <property type="match status" value="1"/>
</dbReference>
<dbReference type="Pfam" id="PF24986">
    <property type="entry name" value="PRC_RimM"/>
    <property type="match status" value="1"/>
</dbReference>
<dbReference type="Pfam" id="PF01782">
    <property type="entry name" value="RimM"/>
    <property type="match status" value="1"/>
</dbReference>
<dbReference type="SUPFAM" id="SSF50346">
    <property type="entry name" value="PRC-barrel domain"/>
    <property type="match status" value="1"/>
</dbReference>
<dbReference type="SUPFAM" id="SSF50447">
    <property type="entry name" value="Translation proteins"/>
    <property type="match status" value="1"/>
</dbReference>
<sequence>MRKEDCFYLGKIAKKFSFKGEVLVYLDTDEPEMYEDLESVFVEVNKNLVPFFIENSNLHKADFLRVRFEDVDNEEEADAIMNCEVYLPLKMLPKLTGNKFYFHEVIGFEIEDKRVGVFGKIVSINDTTAQPLFEVLNGEVEMLIPMIDHFIVKIDRENKKVVMDLPEGLVEMYL</sequence>